<proteinExistence type="evidence at protein level"/>
<name>VCCN2_ARATH</name>
<organism>
    <name type="scientific">Arabidopsis thaliana</name>
    <name type="common">Mouse-ear cress</name>
    <dbReference type="NCBI Taxonomy" id="3702"/>
    <lineage>
        <taxon>Eukaryota</taxon>
        <taxon>Viridiplantae</taxon>
        <taxon>Streptophyta</taxon>
        <taxon>Embryophyta</taxon>
        <taxon>Tracheophyta</taxon>
        <taxon>Spermatophyta</taxon>
        <taxon>Magnoliopsida</taxon>
        <taxon>eudicotyledons</taxon>
        <taxon>Gunneridae</taxon>
        <taxon>Pentapetalae</taxon>
        <taxon>rosids</taxon>
        <taxon>malvids</taxon>
        <taxon>Brassicales</taxon>
        <taxon>Brassicaceae</taxon>
        <taxon>Camelineae</taxon>
        <taxon>Arabidopsis</taxon>
    </lineage>
</organism>
<comment type="function">
    <text evidence="1 3 4">Voltage-dependent chloride (Cl) channel probably contributing to proton motive force (PMF) partitioning across the thylakoid membrane by anion influx into the lumen (PubMed:26947269, PubMed:27216227). Influences thylakoid ultrastructure, including lumen size and organization (By similarity).</text>
</comment>
<comment type="catalytic activity">
    <reaction evidence="3">
        <text>chloride(in) = chloride(out)</text>
        <dbReference type="Rhea" id="RHEA:29823"/>
        <dbReference type="ChEBI" id="CHEBI:17996"/>
    </reaction>
</comment>
<comment type="subcellular location">
    <subcellularLocation>
        <location evidence="3 4">Plastid</location>
        <location evidence="3 4">Chloroplast thylakoid membrane</location>
        <topology evidence="2">Multi-pass membrane protein</topology>
    </subcellularLocation>
</comment>
<comment type="tissue specificity">
    <text evidence="3 4">Mostly expressed in flowers and, to a lower extent, in leaves, stems and roots.</text>
</comment>
<comment type="disruption phenotype">
    <text evidence="3 4">No visible phenotype (PubMed:26947269, PubMed:27216227). The atbest1-1 atbest2-1 double mutant has a reduced non-photochemical quenching (NPQ) during the dark-to-light transition similarly to the atbest1-1 single mutant (PubMed:26947269, PubMed:27216227).</text>
</comment>
<comment type="similarity">
    <text evidence="7">Belongs to the anion channel-forming bestrophin (TC 1.A.46) family. Voltage-dependent chloride channel subfamily.</text>
</comment>
<sequence>MYQSMNLSFSSNFTNLSFLKPRLYSGISARAPKSLHFKFNPSCVSSGPKSDDSPLSEKLISLLKAVPNWSDGIKERRMQQKRSLYTHENWVRHRSSLRHLRHVSSSPSSRVILSLIPPVFFFTTVAILIAGYNSAVDLDWLPDFFPVLRASPLPYQLTAPALALLLVFRTEASYSRFEQGRKAWVKIISGTNDLARLVISSVHGSGDELIIRDALLRYIVAFPVALKCHVIYGSDIASDLKNVIEVDDLSLILQSKHRPRCVIQFISQSLQLLNLDSTKIDMLETKMMQLQEGIGVCEQLMGIPIPLSYTRLTSRFLVLWHLTLPVILWDDCHWNVVPATFISAASLFCIEEVGVLIEEPFSMLALDELCAMVLSNSDEAVESKEVIRNRIIAKKRILEIKHSSNGWHKS</sequence>
<keyword id="KW-0868">Chloride</keyword>
<keyword id="KW-0869">Chloride channel</keyword>
<keyword id="KW-0150">Chloroplast</keyword>
<keyword id="KW-0407">Ion channel</keyword>
<keyword id="KW-0406">Ion transport</keyword>
<keyword id="KW-0472">Membrane</keyword>
<keyword id="KW-0934">Plastid</keyword>
<keyword id="KW-1185">Reference proteome</keyword>
<keyword id="KW-0793">Thylakoid</keyword>
<keyword id="KW-0809">Transit peptide</keyword>
<keyword id="KW-0812">Transmembrane</keyword>
<keyword id="KW-1133">Transmembrane helix</keyword>
<keyword id="KW-0813">Transport</keyword>
<evidence type="ECO:0000250" key="1">
    <source>
        <dbReference type="UniProtKB" id="Q9M2D2"/>
    </source>
</evidence>
<evidence type="ECO:0000255" key="2"/>
<evidence type="ECO:0000269" key="3">
    <source>
    </source>
</evidence>
<evidence type="ECO:0000269" key="4">
    <source>
    </source>
</evidence>
<evidence type="ECO:0000303" key="5">
    <source>
    </source>
</evidence>
<evidence type="ECO:0000303" key="6">
    <source>
    </source>
</evidence>
<evidence type="ECO:0000305" key="7"/>
<evidence type="ECO:0000312" key="8">
    <source>
        <dbReference type="Araport" id="AT2G45870"/>
    </source>
</evidence>
<evidence type="ECO:0000312" key="9">
    <source>
        <dbReference type="EMBL" id="AAC28537.1"/>
    </source>
</evidence>
<reference key="1">
    <citation type="journal article" date="1999" name="Nature">
        <title>Sequence and analysis of chromosome 2 of the plant Arabidopsis thaliana.</title>
        <authorList>
            <person name="Lin X."/>
            <person name="Kaul S."/>
            <person name="Rounsley S.D."/>
            <person name="Shea T.P."/>
            <person name="Benito M.-I."/>
            <person name="Town C.D."/>
            <person name="Fujii C.Y."/>
            <person name="Mason T.M."/>
            <person name="Bowman C.L."/>
            <person name="Barnstead M.E."/>
            <person name="Feldblyum T.V."/>
            <person name="Buell C.R."/>
            <person name="Ketchum K.A."/>
            <person name="Lee J.J."/>
            <person name="Ronning C.M."/>
            <person name="Koo H.L."/>
            <person name="Moffat K.S."/>
            <person name="Cronin L.A."/>
            <person name="Shen M."/>
            <person name="Pai G."/>
            <person name="Van Aken S."/>
            <person name="Umayam L."/>
            <person name="Tallon L.J."/>
            <person name="Gill J.E."/>
            <person name="Adams M.D."/>
            <person name="Carrera A.J."/>
            <person name="Creasy T.H."/>
            <person name="Goodman H.M."/>
            <person name="Somerville C.R."/>
            <person name="Copenhaver G.P."/>
            <person name="Preuss D."/>
            <person name="Nierman W.C."/>
            <person name="White O."/>
            <person name="Eisen J.A."/>
            <person name="Salzberg S.L."/>
            <person name="Fraser C.M."/>
            <person name="Venter J.C."/>
        </authorList>
    </citation>
    <scope>NUCLEOTIDE SEQUENCE [LARGE SCALE GENOMIC DNA]</scope>
    <source>
        <strain>cv. Columbia</strain>
    </source>
</reference>
<reference key="2">
    <citation type="journal article" date="2017" name="Plant J.">
        <title>Araport11: a complete reannotation of the Arabidopsis thaliana reference genome.</title>
        <authorList>
            <person name="Cheng C.Y."/>
            <person name="Krishnakumar V."/>
            <person name="Chan A.P."/>
            <person name="Thibaud-Nissen F."/>
            <person name="Schobel S."/>
            <person name="Town C.D."/>
        </authorList>
    </citation>
    <scope>GENOME REANNOTATION</scope>
    <source>
        <strain>cv. Columbia</strain>
    </source>
</reference>
<reference key="3">
    <citation type="journal article" date="2003" name="Science">
        <title>Empirical analysis of transcriptional activity in the Arabidopsis genome.</title>
        <authorList>
            <person name="Yamada K."/>
            <person name="Lim J."/>
            <person name="Dale J.M."/>
            <person name="Chen H."/>
            <person name="Shinn P."/>
            <person name="Palm C.J."/>
            <person name="Southwick A.M."/>
            <person name="Wu H.C."/>
            <person name="Kim C.J."/>
            <person name="Nguyen M."/>
            <person name="Pham P.K."/>
            <person name="Cheuk R.F."/>
            <person name="Karlin-Newmann G."/>
            <person name="Liu S.X."/>
            <person name="Lam B."/>
            <person name="Sakano H."/>
            <person name="Wu T."/>
            <person name="Yu G."/>
            <person name="Miranda M."/>
            <person name="Quach H.L."/>
            <person name="Tripp M."/>
            <person name="Chang C.H."/>
            <person name="Lee J.M."/>
            <person name="Toriumi M.J."/>
            <person name="Chan M.M."/>
            <person name="Tang C.C."/>
            <person name="Onodera C.S."/>
            <person name="Deng J.M."/>
            <person name="Akiyama K."/>
            <person name="Ansari Y."/>
            <person name="Arakawa T."/>
            <person name="Banh J."/>
            <person name="Banno F."/>
            <person name="Bowser L."/>
            <person name="Brooks S.Y."/>
            <person name="Carninci P."/>
            <person name="Chao Q."/>
            <person name="Choy N."/>
            <person name="Enju A."/>
            <person name="Goldsmith A.D."/>
            <person name="Gurjal M."/>
            <person name="Hansen N.F."/>
            <person name="Hayashizaki Y."/>
            <person name="Johnson-Hopson C."/>
            <person name="Hsuan V.W."/>
            <person name="Iida K."/>
            <person name="Karnes M."/>
            <person name="Khan S."/>
            <person name="Koesema E."/>
            <person name="Ishida J."/>
            <person name="Jiang P.X."/>
            <person name="Jones T."/>
            <person name="Kawai J."/>
            <person name="Kamiya A."/>
            <person name="Meyers C."/>
            <person name="Nakajima M."/>
            <person name="Narusaka M."/>
            <person name="Seki M."/>
            <person name="Sakurai T."/>
            <person name="Satou M."/>
            <person name="Tamse R."/>
            <person name="Vaysberg M."/>
            <person name="Wallender E.K."/>
            <person name="Wong C."/>
            <person name="Yamamura Y."/>
            <person name="Yuan S."/>
            <person name="Shinozaki K."/>
            <person name="Davis R.W."/>
            <person name="Theologis A."/>
            <person name="Ecker J.R."/>
        </authorList>
    </citation>
    <scope>NUCLEOTIDE SEQUENCE [LARGE SCALE MRNA]</scope>
    <source>
        <strain>cv. Columbia</strain>
    </source>
</reference>
<reference key="4">
    <citation type="journal article" date="2016" name="J. Integr. Plant Biol.">
        <title>A bestrophin-like protein modulates the proton motive force across the thylakoid membrane in Arabidopsis.</title>
        <authorList>
            <person name="Duan Z."/>
            <person name="Kong F."/>
            <person name="Zhang L."/>
            <person name="Li W."/>
            <person name="Zhang J."/>
            <person name="Peng L."/>
        </authorList>
    </citation>
    <scope>FUNCTION</scope>
    <scope>DISRUPTION PHENOTYPE</scope>
    <scope>TRANSPORTER ACTIVITY</scope>
    <scope>TISSUE SPECIFICITY</scope>
    <scope>SUBCELLULAR LOCATION</scope>
    <scope>TOPOLOGY</scope>
    <source>
        <strain>cv. Columbia</strain>
    </source>
</reference>
<reference key="5">
    <citation type="journal article" date="2016" name="Nat. Commun.">
        <title>A voltage-dependent chloride channel fine-tunes photosynthesis in plants.</title>
        <authorList>
            <person name="Herdean A."/>
            <person name="Teardo E."/>
            <person name="Nilsson A.K."/>
            <person name="Pfeil B.E."/>
            <person name="Johansson O.N."/>
            <person name="Uennep R."/>
            <person name="Nagy G."/>
            <person name="Zsiros O."/>
            <person name="Dana S."/>
            <person name="Solymosi K."/>
            <person name="Garab G."/>
            <person name="Szabo I."/>
            <person name="Spetea C."/>
            <person name="Lundin B."/>
        </authorList>
    </citation>
    <scope>FUNCTION</scope>
    <scope>DISRUPTION PHENOTYPE</scope>
    <scope>TISSUE SPECIFICITY</scope>
    <scope>SUBCELLULAR LOCATION</scope>
    <source>
        <strain>cv. Columbia</strain>
    </source>
</reference>
<gene>
    <name evidence="6" type="primary">VCCN2</name>
    <name evidence="5" type="synonym">BEST2</name>
    <name evidence="8" type="ordered locus">At2g45870</name>
    <name evidence="9" type="ORF">F4I18.15</name>
</gene>
<accession>O80832</accession>
<dbReference type="EMBL" id="AC004665">
    <property type="protein sequence ID" value="AAC28537.1"/>
    <property type="molecule type" value="Genomic_DNA"/>
</dbReference>
<dbReference type="EMBL" id="CP002685">
    <property type="protein sequence ID" value="AEC10612.1"/>
    <property type="molecule type" value="Genomic_DNA"/>
</dbReference>
<dbReference type="EMBL" id="AY074634">
    <property type="protein sequence ID" value="AAL69450.1"/>
    <property type="molecule type" value="mRNA"/>
</dbReference>
<dbReference type="PIR" id="T02460">
    <property type="entry name" value="T02460"/>
</dbReference>
<dbReference type="RefSeq" id="NP_182111.1">
    <property type="nucleotide sequence ID" value="NM_130150.3"/>
</dbReference>
<dbReference type="SMR" id="O80832"/>
<dbReference type="BioGRID" id="4531">
    <property type="interactions" value="3"/>
</dbReference>
<dbReference type="FunCoup" id="O80832">
    <property type="interactions" value="31"/>
</dbReference>
<dbReference type="IntAct" id="O80832">
    <property type="interactions" value="3"/>
</dbReference>
<dbReference type="STRING" id="3702.O80832"/>
<dbReference type="iPTMnet" id="O80832"/>
<dbReference type="PaxDb" id="3702-AT2G45870.1"/>
<dbReference type="ProteomicsDB" id="242970"/>
<dbReference type="EnsemblPlants" id="AT2G45870.1">
    <property type="protein sequence ID" value="AT2G45870.1"/>
    <property type="gene ID" value="AT2G45870"/>
</dbReference>
<dbReference type="GeneID" id="819195"/>
<dbReference type="Gramene" id="AT2G45870.1">
    <property type="protein sequence ID" value="AT2G45870.1"/>
    <property type="gene ID" value="AT2G45870"/>
</dbReference>
<dbReference type="KEGG" id="ath:AT2G45870"/>
<dbReference type="Araport" id="AT2G45870"/>
<dbReference type="TAIR" id="AT2G45870">
    <property type="gene designation" value="VCCN2"/>
</dbReference>
<dbReference type="eggNOG" id="ENOG502QSQE">
    <property type="taxonomic scope" value="Eukaryota"/>
</dbReference>
<dbReference type="HOGENOM" id="CLU_029790_7_0_1"/>
<dbReference type="InParanoid" id="O80832"/>
<dbReference type="OMA" id="RFLMAWL"/>
<dbReference type="OrthoDB" id="1368at2759"/>
<dbReference type="PhylomeDB" id="O80832"/>
<dbReference type="PRO" id="PR:O80832"/>
<dbReference type="Proteomes" id="UP000006548">
    <property type="component" value="Chromosome 2"/>
</dbReference>
<dbReference type="ExpressionAtlas" id="O80832">
    <property type="expression patterns" value="baseline and differential"/>
</dbReference>
<dbReference type="GO" id="GO:0034707">
    <property type="term" value="C:chloride channel complex"/>
    <property type="evidence" value="ECO:0007669"/>
    <property type="project" value="UniProtKB-KW"/>
</dbReference>
<dbReference type="GO" id="GO:0009533">
    <property type="term" value="C:chloroplast stromal thylakoid"/>
    <property type="evidence" value="ECO:0000314"/>
    <property type="project" value="UniProtKB"/>
</dbReference>
<dbReference type="GO" id="GO:0009535">
    <property type="term" value="C:chloroplast thylakoid membrane"/>
    <property type="evidence" value="ECO:0007669"/>
    <property type="project" value="UniProtKB-SubCell"/>
</dbReference>
<dbReference type="GO" id="GO:0042651">
    <property type="term" value="C:thylakoid membrane"/>
    <property type="evidence" value="ECO:0000314"/>
    <property type="project" value="TAIR"/>
</dbReference>
<dbReference type="GO" id="GO:0005247">
    <property type="term" value="F:voltage-gated chloride channel activity"/>
    <property type="evidence" value="ECO:0007669"/>
    <property type="project" value="InterPro"/>
</dbReference>
<dbReference type="GO" id="GO:0042548">
    <property type="term" value="P:regulation of photosynthesis, light reaction"/>
    <property type="evidence" value="ECO:0000314"/>
    <property type="project" value="TAIR"/>
</dbReference>
<dbReference type="InterPro" id="IPR021134">
    <property type="entry name" value="Bestrophin-like"/>
</dbReference>
<dbReference type="InterPro" id="IPR024701">
    <property type="entry name" value="VCCN1/2"/>
</dbReference>
<dbReference type="InterPro" id="IPR044669">
    <property type="entry name" value="YneE/VCCN1/2-like"/>
</dbReference>
<dbReference type="PANTHER" id="PTHR33281">
    <property type="entry name" value="UPF0187 PROTEIN YNEE"/>
    <property type="match status" value="1"/>
</dbReference>
<dbReference type="PANTHER" id="PTHR33281:SF14">
    <property type="entry name" value="VOLTAGE-DEPENDENT CHLORIDE CHANNEL 2, CHLOROPLASTIC"/>
    <property type="match status" value="1"/>
</dbReference>
<dbReference type="Pfam" id="PF01062">
    <property type="entry name" value="Bestrophin"/>
    <property type="match status" value="1"/>
</dbReference>
<dbReference type="PIRSF" id="PIRSF016988">
    <property type="entry name" value="UCP016988"/>
    <property type="match status" value="1"/>
</dbReference>
<protein>
    <recommendedName>
        <fullName evidence="6">Voltage-dependent chloride channel 2, chloroplastic</fullName>
        <shortName evidence="6">AtVCCN2</shortName>
    </recommendedName>
    <alternativeName>
        <fullName evidence="5">BESTROPHIN-like protein 2</fullName>
        <shortName evidence="5">AtBest2</shortName>
    </alternativeName>
</protein>
<feature type="transit peptide" description="Chloroplast" evidence="2">
    <location>
        <begin position="1"/>
        <end status="unknown"/>
    </location>
</feature>
<feature type="chain" id="PRO_0000036236" description="Voltage-dependent chloride channel 2, chloroplastic">
    <location>
        <begin status="unknown"/>
        <end position="410"/>
    </location>
</feature>
<feature type="topological domain" description="Lumenal, thylakoid" evidence="7">
    <location>
        <begin position="1"/>
        <end position="110"/>
    </location>
</feature>
<feature type="transmembrane region" description="Helical; Name=1" evidence="2">
    <location>
        <begin position="111"/>
        <end position="131"/>
    </location>
</feature>
<feature type="topological domain" description="Stromal" evidence="7">
    <location>
        <begin position="132"/>
        <end position="147"/>
    </location>
</feature>
<feature type="transmembrane region" description="Helical; Name=2" evidence="2">
    <location>
        <begin position="148"/>
        <end position="168"/>
    </location>
</feature>
<feature type="topological domain" description="Lumenal, thylakoid" evidence="7">
    <location>
        <begin position="169"/>
        <end position="315"/>
    </location>
</feature>
<feature type="transmembrane region" description="Helical; Name=3" evidence="2">
    <location>
        <begin position="316"/>
        <end position="336"/>
    </location>
</feature>
<feature type="transmembrane region" description="Helical; Name=4" evidence="2">
    <location>
        <begin position="337"/>
        <end position="357"/>
    </location>
</feature>
<feature type="topological domain" description="Lumenal, thylakoid" evidence="7">
    <location>
        <begin position="358"/>
        <end position="410"/>
    </location>
</feature>